<evidence type="ECO:0000250" key="1"/>
<evidence type="ECO:0000250" key="2">
    <source>
        <dbReference type="UniProtKB" id="P56636"/>
    </source>
</evidence>
<evidence type="ECO:0000250" key="3">
    <source>
        <dbReference type="UniProtKB" id="Q2I2R8"/>
    </source>
</evidence>
<evidence type="ECO:0000255" key="4"/>
<evidence type="ECO:0000269" key="5">
    <source>
    </source>
</evidence>
<evidence type="ECO:0000305" key="6"/>
<evidence type="ECO:0000305" key="7">
    <source>
    </source>
</evidence>
<proteinExistence type="evidence at protein level"/>
<name>CA18_CONMR</name>
<dbReference type="EMBL" id="JF460791">
    <property type="protein sequence ID" value="ADZ99331.1"/>
    <property type="molecule type" value="mRNA"/>
</dbReference>
<dbReference type="SMR" id="F5C3U4"/>
<dbReference type="GO" id="GO:0005576">
    <property type="term" value="C:extracellular region"/>
    <property type="evidence" value="ECO:0007669"/>
    <property type="project" value="UniProtKB-SubCell"/>
</dbReference>
<dbReference type="GO" id="GO:0035792">
    <property type="term" value="C:host cell postsynaptic membrane"/>
    <property type="evidence" value="ECO:0007669"/>
    <property type="project" value="UniProtKB-KW"/>
</dbReference>
<dbReference type="GO" id="GO:0030550">
    <property type="term" value="F:acetylcholine receptor inhibitor activity"/>
    <property type="evidence" value="ECO:0007669"/>
    <property type="project" value="UniProtKB-KW"/>
</dbReference>
<dbReference type="GO" id="GO:0090729">
    <property type="term" value="F:toxin activity"/>
    <property type="evidence" value="ECO:0007669"/>
    <property type="project" value="UniProtKB-KW"/>
</dbReference>
<dbReference type="InterPro" id="IPR009958">
    <property type="entry name" value="Conotoxin_a-typ"/>
</dbReference>
<dbReference type="Pfam" id="PF07365">
    <property type="entry name" value="Toxin_8"/>
    <property type="match status" value="1"/>
</dbReference>
<feature type="signal peptide" evidence="4">
    <location>
        <begin position="1"/>
        <end position="21"/>
    </location>
</feature>
<feature type="propeptide" id="PRO_0000430174">
    <location>
        <begin position="22"/>
        <end position="49"/>
    </location>
</feature>
<feature type="peptide" id="PRO_0000430175" description="Alpha-conotoxin Mr1.7b">
    <location>
        <begin position="51"/>
        <end position="69"/>
    </location>
</feature>
<feature type="peptide" id="PRO_0000430176" description="Alpha-conotoxin MrIC">
    <location>
        <begin position="52"/>
        <end position="68"/>
    </location>
</feature>
<feature type="peptide" id="PRO_0000430177" description="Alpha-conotoxin Mr1.7a">
    <location>
        <begin position="53"/>
        <end position="68"/>
    </location>
</feature>
<feature type="region of interest" description="Lacks the Ser-Xaa-Pro motif that is crucial for potent interaction with nAChR" evidence="6">
    <location>
        <begin position="56"/>
        <end position="58"/>
    </location>
</feature>
<feature type="modified residue" description="4-hydroxyproline; in Mr1.7b" evidence="5">
    <location>
        <position position="52"/>
    </location>
</feature>
<feature type="modified residue" description="4-hydroxyproline; in Mr1.7b" evidence="5">
    <location>
        <position position="58"/>
    </location>
</feature>
<feature type="modified residue" description="Cysteine amide" evidence="1">
    <location>
        <position position="68"/>
    </location>
</feature>
<feature type="disulfide bond" evidence="2">
    <location>
        <begin position="54"/>
        <end position="60"/>
    </location>
</feature>
<feature type="disulfide bond" evidence="2">
    <location>
        <begin position="55"/>
        <end position="68"/>
    </location>
</feature>
<feature type="sequence variant" description="In Mr1.7b.">
    <original>G</original>
    <variation>S</variation>
    <location>
        <position position="69"/>
    </location>
</feature>
<accession>F5C3U4</accession>
<comment type="function">
    <molecule>Alpha-conotoxin MrIC</molecule>
    <text evidence="3 5">Acts as a co-agonist with PNU (an alpha-7 nAChR-selective allosteric modulator) at the endogenous alpha-7/CHRNA7 nicotinic acetylcholine receptors (nAChR) when tested in human SH-SY5Y neuroblastoma cells. Is the third alpha-conotoxin that acts as an agonist (after alpha-conotoxin SrIA/SrIB). Also acts as an antagonist at human alpha-7 nAChRs heterologously expressed in Xenopus oocytes (PubMed:24351107). Has possibly a distinct nAChR binding mode from other alpha-conotoxins, due to a different three residue motif (lacks the Ser-Xaa-Pro motif) (By similarity).</text>
</comment>
<comment type="function">
    <molecule>Alpha-conotoxin Mr1.7a</molecule>
    <text evidence="3 5">Acts as a weak partial agonist at alpha-7/CHRNA7 nicotinic acetylcholine receptors (nAChR) when tested in human SH-SY5Y neuroblastoma cells (PubMed:24351107). Has possibly a distinct nAChR binding mode from other alpha-conotoxins, due to a different three residue motif (lacks the Ser-Xaa-Pro motif) (By similarity).</text>
</comment>
<comment type="subcellular location">
    <subcellularLocation>
        <location evidence="5">Secreted</location>
    </subcellularLocation>
</comment>
<comment type="tissue specificity">
    <text evidence="7">Expressed by the venom duct.</text>
</comment>
<comment type="domain">
    <text evidence="6">The cysteine framework is I (CC-C-C). Alpha4/7 pattern.</text>
</comment>
<comment type="PTM">
    <text>Two 4-hydroxyprolines have been detected by MS but the assignment of which of the three prolines is modified is uncertain (PubMed:23152539, PubMed:24351107).</text>
</comment>
<comment type="miscellaneous">
    <text evidence="7">Negative results: neither MrIC, Mr1.7b, nor Mr1.7a inhibit alpha-7/CHRNA7, alpha-3-beta-2/CHRNA3-CHRNB2 and alpha-3-beta-4/CHRNA3-CHRNB4 nAChRs endogenously expressed in human SH-SY5Y neuroblastoma cells. MrIC does not activate alpha-3-beta-2/CHRNA3-CHRNB2 and alpha-3-beta-4/CHRNA3-CHRNB4 endogenously expressed in human SH-SY5Y neuroblastoma cells. Mr1.7b does not activate alpha-7 endogenously expressed in human SH-SY5Y neuroblastoma cells (PubMed:24351107).</text>
</comment>
<comment type="similarity">
    <text evidence="6">Belongs to the conotoxin A superfamily.</text>
</comment>
<comment type="caution">
    <text evidence="6">The cDNA sequence of this peptide has been submitted (EMBL entry JF460791) and described in PubMed:22781954 under the name Mr1.8.</text>
</comment>
<organism>
    <name type="scientific">Conus marmoreus</name>
    <name type="common">Marble cone</name>
    <dbReference type="NCBI Taxonomy" id="42752"/>
    <lineage>
        <taxon>Eukaryota</taxon>
        <taxon>Metazoa</taxon>
        <taxon>Spiralia</taxon>
        <taxon>Lophotrochozoa</taxon>
        <taxon>Mollusca</taxon>
        <taxon>Gastropoda</taxon>
        <taxon>Caenogastropoda</taxon>
        <taxon>Neogastropoda</taxon>
        <taxon>Conoidea</taxon>
        <taxon>Conidae</taxon>
        <taxon>Conus</taxon>
    </lineage>
</organism>
<keyword id="KW-0008">Acetylcholine receptor inhibiting toxin</keyword>
<keyword id="KW-0027">Amidation</keyword>
<keyword id="KW-0165">Cleavage on pair of basic residues</keyword>
<keyword id="KW-1015">Disulfide bond</keyword>
<keyword id="KW-0379">Hydroxylation</keyword>
<keyword id="KW-0528">Neurotoxin</keyword>
<keyword id="KW-0629">Postsynaptic neurotoxin</keyword>
<keyword id="KW-0964">Secreted</keyword>
<keyword id="KW-0732">Signal</keyword>
<keyword id="KW-0800">Toxin</keyword>
<sequence>MGMRMMFTVFLLVVLATTVVSFTSNRVLDPAFRRRNAAAKASDLIALNARRPECCTHPACHVSNPELCG</sequence>
<protein>
    <recommendedName>
        <fullName>Alpha-conotoxin Mr1.7a</fullName>
    </recommendedName>
    <alternativeName>
        <fullName>Conotoxin Mr1.8</fullName>
    </alternativeName>
    <component>
        <recommendedName>
            <fullName>Alpha-conotoxin MrIC</fullName>
        </recommendedName>
        <alternativeName>
            <fullName>Mr1.7c</fullName>
        </alternativeName>
    </component>
    <component>
        <recommendedName>
            <fullName>Alpha-conotoxin Mr1.7b</fullName>
        </recommendedName>
        <alternativeName>
            <fullName>Mr002</fullName>
        </alternativeName>
    </component>
</protein>
<reference key="1">
    <citation type="journal article" date="2012" name="Toxicon">
        <title>Diversity and evolution of conotoxins in Conus virgo, Conus eburneus, Conus imperialis and Conus marmoreus from the South China Sea.</title>
        <authorList>
            <person name="Liu Z."/>
            <person name="Li H."/>
            <person name="Liu N."/>
            <person name="Wu C."/>
            <person name="Jiang J."/>
            <person name="Yue J."/>
            <person name="Jing Y."/>
            <person name="Dai Q."/>
        </authorList>
    </citation>
    <scope>NUCLEOTIDE SEQUENCE [MRNA]</scope>
    <source>
        <tissue>Venom duct</tissue>
    </source>
</reference>
<reference key="2">
    <citation type="journal article" date="2013" name="Mol. Cell. Proteomics">
        <title>Deep venomics reveals the mechanism for expanded peptide diversity in cone snail venom.</title>
        <authorList>
            <person name="Dutertre S."/>
            <person name="Jin A.H."/>
            <person name="Kaas Q."/>
            <person name="Jones A."/>
            <person name="Alewood P.F."/>
            <person name="Lewis R.J."/>
        </authorList>
    </citation>
    <scope>NUCLEOTIDE SEQUENCE [MRNA]</scope>
    <scope>IDENTIFICATION BY MASS SPECTROMETRY OF MR1.7B</scope>
    <source>
        <tissue>Venom</tissue>
        <tissue>Venom duct</tissue>
    </source>
</reference>
<reference key="3">
    <citation type="journal article" date="2014" name="Biochemistry">
        <title>MrIC, a novel alpha-conotoxin agonist in the presence of PNU at endogenous alpha7 nicotinic acetylcholine receptors.</title>
        <authorList>
            <person name="Jin A.H."/>
            <person name="Vetter I."/>
            <person name="Dutertre S."/>
            <person name="Abraham N."/>
            <person name="Emidio N.B."/>
            <person name="Inserra M."/>
            <person name="Murali S.S."/>
            <person name="Christie M.J."/>
            <person name="Alewood P.F."/>
            <person name="Lewis R.J."/>
        </authorList>
    </citation>
    <scope>FUNCTION</scope>
    <scope>IDENTIFICATION BY MASS SPECTROMETRY OF MR1.7A; MR1.7B AND MRIC</scope>
    <scope>SYNTHESIS OF 51-69; 52-68 AND 53-68</scope>
    <scope>HYDROXYLATION AT PRO-52 AND PRO-58</scope>
    <source>
        <tissue>Venom</tissue>
        <tissue>Venom duct</tissue>
    </source>
</reference>